<dbReference type="EMBL" id="AE006468">
    <property type="protein sequence ID" value="AAL20965.1"/>
    <property type="molecule type" value="Genomic_DNA"/>
</dbReference>
<dbReference type="EMBL" id="L31538">
    <property type="status" value="NOT_ANNOTATED_CDS"/>
    <property type="molecule type" value="Genomic_DNA"/>
</dbReference>
<dbReference type="RefSeq" id="NP_461006.1">
    <property type="nucleotide sequence ID" value="NC_003197.2"/>
</dbReference>
<dbReference type="RefSeq" id="WP_000384326.1">
    <property type="nucleotide sequence ID" value="NC_003197.2"/>
</dbReference>
<dbReference type="SMR" id="P0A212"/>
<dbReference type="STRING" id="99287.STM2061"/>
<dbReference type="PaxDb" id="99287-STM2061"/>
<dbReference type="GeneID" id="1253582"/>
<dbReference type="KEGG" id="stm:STM2061"/>
<dbReference type="PATRIC" id="fig|99287.12.peg.2183"/>
<dbReference type="HOGENOM" id="CLU_113664_3_2_6"/>
<dbReference type="OMA" id="TPWYQFF"/>
<dbReference type="PhylomeDB" id="P0A212"/>
<dbReference type="BioCyc" id="SENT99287:STM2061-MONOMER"/>
<dbReference type="Proteomes" id="UP000001014">
    <property type="component" value="Chromosome"/>
</dbReference>
<dbReference type="GO" id="GO:0005737">
    <property type="term" value="C:cytoplasm"/>
    <property type="evidence" value="ECO:0007669"/>
    <property type="project" value="UniProtKB-SubCell"/>
</dbReference>
<dbReference type="GO" id="GO:0008657">
    <property type="term" value="F:DNA topoisomerase type II (double strand cut, ATP-hydrolyzing) inhibitor activity"/>
    <property type="evidence" value="ECO:0007669"/>
    <property type="project" value="UniProtKB-UniRule"/>
</dbReference>
<dbReference type="Gene3D" id="3.20.80.10">
    <property type="entry name" value="Regulatory factor, effector binding domain"/>
    <property type="match status" value="1"/>
</dbReference>
<dbReference type="HAMAP" id="MF_01896">
    <property type="entry name" value="DNA_gyrase_inhibitor"/>
    <property type="match status" value="1"/>
</dbReference>
<dbReference type="InterPro" id="IPR010499">
    <property type="entry name" value="AraC_E-bd"/>
</dbReference>
<dbReference type="InterPro" id="IPR050908">
    <property type="entry name" value="DNA_gyrase_inhibitor"/>
</dbReference>
<dbReference type="InterPro" id="IPR024911">
    <property type="entry name" value="DNA_gyrase_inhibitor_GyrI"/>
</dbReference>
<dbReference type="InterPro" id="IPR029442">
    <property type="entry name" value="GyrI-like"/>
</dbReference>
<dbReference type="InterPro" id="IPR011256">
    <property type="entry name" value="Reg_factor_effector_dom_sf"/>
</dbReference>
<dbReference type="NCBIfam" id="NF007451">
    <property type="entry name" value="PRK10016.1"/>
    <property type="match status" value="1"/>
</dbReference>
<dbReference type="PANTHER" id="PTHR40055:SF2">
    <property type="entry name" value="DNA GYRASE INHIBITOR"/>
    <property type="match status" value="1"/>
</dbReference>
<dbReference type="PANTHER" id="PTHR40055">
    <property type="entry name" value="TRANSCRIPTIONAL REGULATOR YGIV-RELATED"/>
    <property type="match status" value="1"/>
</dbReference>
<dbReference type="Pfam" id="PF06445">
    <property type="entry name" value="GyrI-like"/>
    <property type="match status" value="1"/>
</dbReference>
<dbReference type="SMART" id="SM00871">
    <property type="entry name" value="AraC_E_bind"/>
    <property type="match status" value="1"/>
</dbReference>
<dbReference type="SUPFAM" id="SSF55136">
    <property type="entry name" value="Probable bacterial effector-binding domain"/>
    <property type="match status" value="1"/>
</dbReference>
<comment type="function">
    <text evidence="1">Inhibits the supercoiling activity of DNA gyrase. Acts by inhibiting DNA gyrase at an early step, prior to (or at the step of) binding of DNA by the gyrase. It protects cells against toxins that target DNA gyrase, by inhibiting activity of these toxins and reducing the formation of lethal double-strand breaks in the cell.</text>
</comment>
<comment type="subunit">
    <text evidence="1">Interacts with DNA gyrase.</text>
</comment>
<comment type="subcellular location">
    <subcellularLocation>
        <location evidence="1">Cytoplasm</location>
    </subcellularLocation>
</comment>
<comment type="similarity">
    <text evidence="1">Belongs to the DNA gyrase inhibitor family.</text>
</comment>
<comment type="sequence caution" evidence="2">
    <conflict type="frameshift">
        <sequence resource="EMBL" id="L31538"/>
    </conflict>
</comment>
<proteinExistence type="inferred from homology"/>
<name>SBMC_SALTY</name>
<reference key="1">
    <citation type="journal article" date="2001" name="Nature">
        <title>Complete genome sequence of Salmonella enterica serovar Typhimurium LT2.</title>
        <authorList>
            <person name="McClelland M."/>
            <person name="Sanderson K.E."/>
            <person name="Spieth J."/>
            <person name="Clifton S.W."/>
            <person name="Latreille P."/>
            <person name="Courtney L."/>
            <person name="Porwollik S."/>
            <person name="Ali J."/>
            <person name="Dante M."/>
            <person name="Du F."/>
            <person name="Hou S."/>
            <person name="Layman D."/>
            <person name="Leonard S."/>
            <person name="Nguyen C."/>
            <person name="Scott K."/>
            <person name="Holmes A."/>
            <person name="Grewal N."/>
            <person name="Mulvaney E."/>
            <person name="Ryan E."/>
            <person name="Sun H."/>
            <person name="Florea L."/>
            <person name="Miller W."/>
            <person name="Stoneking T."/>
            <person name="Nhan M."/>
            <person name="Waterston R."/>
            <person name="Wilson R.K."/>
        </authorList>
    </citation>
    <scope>NUCLEOTIDE SEQUENCE [LARGE SCALE GENOMIC DNA]</scope>
    <source>
        <strain>LT2 / SGSC1412 / ATCC 700720</strain>
    </source>
</reference>
<reference key="2">
    <citation type="journal article" date="1995" name="Gene">
        <title>Cloning and characterization of a gene cluster, phsBCDEF, necessary for the production of hydrogen sulfide from thiosulfate by Salmonella typhimurium.</title>
        <authorList>
            <person name="Alami N."/>
            <person name="Hallenbeck P.C."/>
        </authorList>
    </citation>
    <scope>NUCLEOTIDE SEQUENCE [GENOMIC DNA] OF 1-64</scope>
    <source>
        <strain>LT2</strain>
    </source>
</reference>
<reference key="3">
    <citation type="unpublished observations" date="1995-04">
        <authorList>
            <person name="Robison K."/>
        </authorList>
    </citation>
    <scope>IDENTIFICATION</scope>
</reference>
<evidence type="ECO:0000255" key="1">
    <source>
        <dbReference type="HAMAP-Rule" id="MF_01896"/>
    </source>
</evidence>
<evidence type="ECO:0000305" key="2"/>
<keyword id="KW-0963">Cytoplasm</keyword>
<keyword id="KW-1185">Reference proteome</keyword>
<keyword id="KW-0346">Stress response</keyword>
<protein>
    <recommendedName>
        <fullName evidence="1">DNA gyrase inhibitor</fullName>
    </recommendedName>
</protein>
<organism>
    <name type="scientific">Salmonella typhimurium (strain LT2 / SGSC1412 / ATCC 700720)</name>
    <dbReference type="NCBI Taxonomy" id="99287"/>
    <lineage>
        <taxon>Bacteria</taxon>
        <taxon>Pseudomonadati</taxon>
        <taxon>Pseudomonadota</taxon>
        <taxon>Gammaproteobacteria</taxon>
        <taxon>Enterobacterales</taxon>
        <taxon>Enterobacteriaceae</taxon>
        <taxon>Salmonella</taxon>
    </lineage>
</organism>
<accession>P0A212</accession>
<accession>P41781</accession>
<sequence>MDYEIRQEQKRKIAGFHMVGPWEHTVKQGFEQLMTWVDRQRIVPVEWIAVYYDNPDVVPAEKLRCDTVVSVAENFILPDNSEGVIVTAIEGGEYATAVARVEDRDFAKPWERFFDVLEQDSAYQIASAPCFETYLNNGMEDGYWDIEMYIPVQRK</sequence>
<gene>
    <name evidence="1" type="primary">sbmC</name>
    <name type="synonym">gyrI</name>
    <name type="ordered locus">STM2061</name>
</gene>
<feature type="chain" id="PRO_0000083884" description="DNA gyrase inhibitor">
    <location>
        <begin position="1"/>
        <end position="155"/>
    </location>
</feature>
<feature type="sequence conflict" description="In Ref. 2; L31538." evidence="2" ref="2">
    <original>EKLR</original>
    <variation>GPAS</variation>
    <location>
        <begin position="61"/>
        <end position="64"/>
    </location>
</feature>